<keyword id="KW-0034">Amyloid</keyword>
<keyword id="KW-1003">Cell membrane</keyword>
<keyword id="KW-0186">Copper</keyword>
<keyword id="KW-1015">Disulfide bond</keyword>
<keyword id="KW-0325">Glycoprotein</keyword>
<keyword id="KW-0333">Golgi apparatus</keyword>
<keyword id="KW-0336">GPI-anchor</keyword>
<keyword id="KW-0449">Lipoprotein</keyword>
<keyword id="KW-0472">Membrane</keyword>
<keyword id="KW-0479">Metal-binding</keyword>
<keyword id="KW-0640">Prion</keyword>
<keyword id="KW-0677">Repeat</keyword>
<keyword id="KW-0732">Signal</keyword>
<keyword id="KW-0862">Zinc</keyword>
<feature type="signal peptide" evidence="4">
    <location>
        <begin position="1"/>
        <end position="24"/>
    </location>
</feature>
<feature type="chain" id="PRO_0000025737" description="Major prion protein 2">
    <location>
        <begin position="25"/>
        <end position="233"/>
    </location>
</feature>
<feature type="propeptide" id="PRO_0000025738" description="Removed in mature form" evidence="4">
    <location>
        <begin position="234"/>
        <end position="256"/>
    </location>
</feature>
<feature type="repeat" description="1">
    <location>
        <begin position="54"/>
        <end position="62"/>
    </location>
</feature>
<feature type="repeat" description="2">
    <location>
        <begin position="63"/>
        <end position="70"/>
    </location>
</feature>
<feature type="repeat" description="3">
    <location>
        <begin position="71"/>
        <end position="78"/>
    </location>
</feature>
<feature type="repeat" description="4">
    <location>
        <begin position="79"/>
        <end position="86"/>
    </location>
</feature>
<feature type="repeat" description="5">
    <location>
        <begin position="87"/>
        <end position="95"/>
    </location>
</feature>
<feature type="region of interest" description="Interaction with GRB2, ERI3 and SYN1" evidence="3">
    <location>
        <begin position="25"/>
        <end position="233"/>
    </location>
</feature>
<feature type="region of interest" description="Disordered" evidence="5">
    <location>
        <begin position="28"/>
        <end position="110"/>
    </location>
</feature>
<feature type="region of interest" description="5 X 8 AA tandem repeats of P-H-G-G-G-W-G-Q">
    <location>
        <begin position="54"/>
        <end position="95"/>
    </location>
</feature>
<feature type="compositionally biased region" description="Gly residues" evidence="5">
    <location>
        <begin position="58"/>
        <end position="99"/>
    </location>
</feature>
<feature type="binding site" evidence="1">
    <location>
        <position position="64"/>
    </location>
    <ligand>
        <name>Cu(2+)</name>
        <dbReference type="ChEBI" id="CHEBI:29036"/>
        <label>1</label>
    </ligand>
</feature>
<feature type="binding site" evidence="1">
    <location>
        <position position="65"/>
    </location>
    <ligand>
        <name>Cu(2+)</name>
        <dbReference type="ChEBI" id="CHEBI:29036"/>
        <label>1</label>
    </ligand>
</feature>
<feature type="binding site" evidence="1">
    <location>
        <position position="66"/>
    </location>
    <ligand>
        <name>Cu(2+)</name>
        <dbReference type="ChEBI" id="CHEBI:29036"/>
        <label>1</label>
    </ligand>
</feature>
<feature type="binding site" evidence="1">
    <location>
        <position position="72"/>
    </location>
    <ligand>
        <name>Cu(2+)</name>
        <dbReference type="ChEBI" id="CHEBI:29036"/>
        <label>2</label>
    </ligand>
</feature>
<feature type="binding site" evidence="1">
    <location>
        <position position="74"/>
    </location>
    <ligand>
        <name>Cu(2+)</name>
        <dbReference type="ChEBI" id="CHEBI:29036"/>
        <label>2</label>
    </ligand>
</feature>
<feature type="binding site" evidence="1">
    <location>
        <position position="80"/>
    </location>
    <ligand>
        <name>Cu(2+)</name>
        <dbReference type="ChEBI" id="CHEBI:29036"/>
        <label>3</label>
    </ligand>
</feature>
<feature type="binding site" evidence="1">
    <location>
        <position position="81"/>
    </location>
    <ligand>
        <name>Cu(2+)</name>
        <dbReference type="ChEBI" id="CHEBI:29036"/>
        <label>3</label>
    </ligand>
</feature>
<feature type="binding site" evidence="1">
    <location>
        <position position="82"/>
    </location>
    <ligand>
        <name>Cu(2+)</name>
        <dbReference type="ChEBI" id="CHEBI:29036"/>
        <label>3</label>
    </ligand>
</feature>
<feature type="binding site" evidence="1">
    <location>
        <position position="88"/>
    </location>
    <ligand>
        <name>Cu(2+)</name>
        <dbReference type="ChEBI" id="CHEBI:29036"/>
        <label>4</label>
    </ligand>
</feature>
<feature type="binding site" evidence="1">
    <location>
        <position position="90"/>
    </location>
    <ligand>
        <name>Cu(2+)</name>
        <dbReference type="ChEBI" id="CHEBI:29036"/>
        <label>4</label>
    </ligand>
</feature>
<feature type="binding site" evidence="1">
    <location>
        <position position="91"/>
    </location>
    <ligand>
        <name>Cu(2+)</name>
        <dbReference type="ChEBI" id="CHEBI:29036"/>
        <label>4</label>
    </ligand>
</feature>
<feature type="lipid moiety-binding region" description="GPI-anchor amidated alanine" evidence="4">
    <location>
        <position position="233"/>
    </location>
</feature>
<feature type="glycosylation site" description="N-linked (GlcNAc...) asparagine" evidence="4">
    <location>
        <position position="184"/>
    </location>
</feature>
<feature type="glycosylation site" description="N-linked (GlcNAc...) asparagine" evidence="4">
    <location>
        <position position="200"/>
    </location>
</feature>
<feature type="disulfide bond" evidence="2">
    <location>
        <begin position="182"/>
        <end position="217"/>
    </location>
</feature>
<accession>P40243</accession>
<name>PRIO2_TRAST</name>
<evidence type="ECO:0000250" key="1">
    <source>
        <dbReference type="UniProtKB" id="P04156"/>
    </source>
</evidence>
<evidence type="ECO:0000250" key="2">
    <source>
        <dbReference type="UniProtKB" id="P04273"/>
    </source>
</evidence>
<evidence type="ECO:0000250" key="3">
    <source>
        <dbReference type="UniProtKB" id="P04925"/>
    </source>
</evidence>
<evidence type="ECO:0000255" key="4"/>
<evidence type="ECO:0000256" key="5">
    <source>
        <dbReference type="SAM" id="MobiDB-lite"/>
    </source>
</evidence>
<evidence type="ECO:0000305" key="6"/>
<organism>
    <name type="scientific">Tragelaphus strepsiceros</name>
    <name type="common">Greater kudu</name>
    <dbReference type="NCBI Taxonomy" id="9946"/>
    <lineage>
        <taxon>Eukaryota</taxon>
        <taxon>Metazoa</taxon>
        <taxon>Chordata</taxon>
        <taxon>Craniata</taxon>
        <taxon>Vertebrata</taxon>
        <taxon>Euteleostomi</taxon>
        <taxon>Mammalia</taxon>
        <taxon>Eutheria</taxon>
        <taxon>Laurasiatheria</taxon>
        <taxon>Artiodactyla</taxon>
        <taxon>Ruminantia</taxon>
        <taxon>Pecora</taxon>
        <taxon>Bovidae</taxon>
        <taxon>Bovinae</taxon>
        <taxon>Tragelaphus</taxon>
    </lineage>
</organism>
<dbReference type="EMBL" id="X74759">
    <property type="protein sequence ID" value="CAA52775.1"/>
    <property type="molecule type" value="Genomic_DNA"/>
</dbReference>
<dbReference type="SMR" id="P40243"/>
<dbReference type="GO" id="GO:0005794">
    <property type="term" value="C:Golgi apparatus"/>
    <property type="evidence" value="ECO:0007669"/>
    <property type="project" value="UniProtKB-SubCell"/>
</dbReference>
<dbReference type="GO" id="GO:0005886">
    <property type="term" value="C:plasma membrane"/>
    <property type="evidence" value="ECO:0007669"/>
    <property type="project" value="UniProtKB-SubCell"/>
</dbReference>
<dbReference type="GO" id="GO:0098552">
    <property type="term" value="C:side of membrane"/>
    <property type="evidence" value="ECO:0007669"/>
    <property type="project" value="UniProtKB-KW"/>
</dbReference>
<dbReference type="GO" id="GO:0005507">
    <property type="term" value="F:copper ion binding"/>
    <property type="evidence" value="ECO:0000250"/>
    <property type="project" value="UniProtKB"/>
</dbReference>
<dbReference type="GO" id="GO:0051260">
    <property type="term" value="P:protein homooligomerization"/>
    <property type="evidence" value="ECO:0007669"/>
    <property type="project" value="InterPro"/>
</dbReference>
<dbReference type="FunFam" id="1.10.790.10:FF:000001">
    <property type="entry name" value="Major prion protein"/>
    <property type="match status" value="1"/>
</dbReference>
<dbReference type="Gene3D" id="1.10.790.10">
    <property type="entry name" value="Prion/Doppel protein, beta-ribbon domain"/>
    <property type="match status" value="1"/>
</dbReference>
<dbReference type="InterPro" id="IPR000817">
    <property type="entry name" value="Prion"/>
</dbReference>
<dbReference type="InterPro" id="IPR036924">
    <property type="entry name" value="Prion/Doppel_b-ribbon_dom_sf"/>
</dbReference>
<dbReference type="InterPro" id="IPR022416">
    <property type="entry name" value="Prion/Doppel_prot_b-ribbon_dom"/>
</dbReference>
<dbReference type="InterPro" id="IPR020949">
    <property type="entry name" value="Prion_copper_b_octapeptide"/>
</dbReference>
<dbReference type="InterPro" id="IPR025860">
    <property type="entry name" value="Prion_N"/>
</dbReference>
<dbReference type="PANTHER" id="PTHR15506">
    <property type="entry name" value="DOPPEL PRION"/>
    <property type="match status" value="1"/>
</dbReference>
<dbReference type="PANTHER" id="PTHR15506:SF2">
    <property type="entry name" value="MAJOR PRION PROTEIN"/>
    <property type="match status" value="1"/>
</dbReference>
<dbReference type="Pfam" id="PF00377">
    <property type="entry name" value="Prion"/>
    <property type="match status" value="1"/>
</dbReference>
<dbReference type="Pfam" id="PF11587">
    <property type="entry name" value="Prion_bPrPp"/>
    <property type="match status" value="1"/>
</dbReference>
<dbReference type="Pfam" id="PF03991">
    <property type="entry name" value="Prion_octapep"/>
    <property type="match status" value="1"/>
</dbReference>
<dbReference type="PRINTS" id="PR00341">
    <property type="entry name" value="PRION"/>
</dbReference>
<dbReference type="SMART" id="SM00157">
    <property type="entry name" value="PRP"/>
    <property type="match status" value="1"/>
</dbReference>
<dbReference type="SUPFAM" id="SSF54098">
    <property type="entry name" value="Prion-like"/>
    <property type="match status" value="1"/>
</dbReference>
<dbReference type="PROSITE" id="PS00291">
    <property type="entry name" value="PRION_1"/>
    <property type="match status" value="1"/>
</dbReference>
<dbReference type="PROSITE" id="PS00706">
    <property type="entry name" value="PRION_2"/>
    <property type="match status" value="1"/>
</dbReference>
<comment type="function">
    <text evidence="1 3">Its primary physiological function is unclear. Has cytoprotective activity against internal or environmental stresses. May play a role in neuronal development and synaptic plasticity. May be required for neuronal myelin sheath maintenance. May play a role in iron uptake and iron homeostasis. Soluble oligomers are toxic to cultured neuroblastoma cells and induce apoptosis (in vitro). Association with GPC1 (via its heparan sulfate chains) targets PRNP to lipid rafts. Also provides Cu(2+) or Zn(2+) for the ascorbate-mediated GPC1 deaminase degradation of its heparan sulfate side chains (By similarity).</text>
</comment>
<comment type="subunit">
    <text evidence="1 3">Monomer and homodimer. Has a tendency to aggregate into amyloid fibrils containing a cross-beta spine, formed by a steric zipper of superposed beta-strands. Soluble oligomers may represent an intermediate stage on the path to fibril formation. Copper binding may promote oligomerization. Interacts with GRB2, APP, ERI3/PRNPIP and SYN1. Mislocalized cytosolically exposed PrP interacts with MGRN1; this interaction alters MGRN1 subcellular location and causes lysosomal enlargement. Interacts with KIAA1191.</text>
</comment>
<comment type="subcellular location">
    <subcellularLocation>
        <location evidence="1">Cell membrane</location>
        <topology evidence="1">Lipid-anchor</topology>
        <topology evidence="1">GPI-anchor</topology>
    </subcellularLocation>
    <subcellularLocation>
        <location evidence="3">Golgi apparatus</location>
    </subcellularLocation>
    <text evidence="1">Targeted to lipid rafts via association with the heparan sulfate chains of GPC1. Colocates, in the presence of Cu(2+), to vesicles in para- and perinuclear regions, where both proteins undergo internalization. Heparin displaces PRNP from lipid rafts and promotes endocytosis.</text>
</comment>
<comment type="domain">
    <text evidence="1">The normal, monomeric form has a mainly alpha-helical structure. The disease-associated, protease-resistant form forms amyloid fibrils containing a cross-beta spine, formed by a steric zipper of superposed beta-strands. Disease mutations may favor intermolecular contacts via short beta strands, and may thereby trigger oligomerization.</text>
</comment>
<comment type="domain">
    <text evidence="1">Contains an N-terminal region composed of octamer repeats. At low copper concentrations, the sidechains of His residues from three or four repeats contribute to the binding of a single copper ion. Alternatively, a copper ion can be bound by interaction with the sidechain and backbone amide nitrogen of a single His residue. The observed copper binding stoichiometry suggests that two repeat regions cooperate to stabilize the binding of a single copper ion. At higher copper concentrations, each octamer can bind one copper ion by interactions with the His sidechain and Gly backbone atoms. A mixture of binding types may occur, especially in the case of octamer repeat expansion. Copper binding may stabilize the conformation of this region and may promote oligomerization.</text>
</comment>
<comment type="disease">
    <text evidence="6">Variations in PRNP are responsible of transmissible bovine spongiform encephalopathies (BSE), a class of neurodegenerative diseases that affect various mammals. These diseases are caused by abnormally folded prion proteins. BSE can be subdivided into at least three groups: classical, H-type and L-type, with the latter 2 collectively referred to as atypical BSE. Susceptibility or resistance to a BSE disease can be influenced by at least 3 factors related to the host prion protein: protein expression levels, number of octapeptide repeats, and specific polymorphisms. In cattle, as in humans, BSEs can occur as infectious, spontaneous and genetic diseases.</text>
</comment>
<comment type="similarity">
    <text evidence="6">Belongs to the prion family.</text>
</comment>
<sequence>MVKSHIGSWILVLFVAMWSDVALCKKRPKPGGGWNTGGSRYPGQGSPGGNRYPPQEGGDWGQPHGGGWGQPHVGGWGQPHGGGWGQPHGGGGWGQGGTHGQWNKPSKPKTNMKHVAGAAAAGAVVGGLGGYMLGSAMSRPLIHFGSDYEDRYYRENMYRYPNQVYYRPVDQYSNQNNFVHDCVNITVKQHTVTTTTKGENFTETDIKMMERVVEQMCITQYQRESEAYYQRGASVILFSSPPVILLISFLIFLIVG</sequence>
<reference key="1">
    <citation type="submission" date="1993-08" db="EMBL/GenBank/DDBJ databases">
        <authorList>
            <person name="Martin T.C."/>
            <person name="Hughes S.L."/>
            <person name="Hughes K.J."/>
            <person name="Dawson M."/>
        </authorList>
    </citation>
    <scope>NUCLEOTIDE SEQUENCE [GENOMIC DNA]</scope>
    <source>
        <tissue>Brain</tissue>
    </source>
</reference>
<proteinExistence type="inferred from homology"/>
<protein>
    <recommendedName>
        <fullName>Major prion protein 2</fullName>
        <shortName>PrP</shortName>
    </recommendedName>
    <alternativeName>
        <fullName>Major scrapie-associated fibril protein 2</fullName>
    </alternativeName>
    <cdAntigenName>CD230</cdAntigenName>
</protein>